<sequence length="149" mass="16775">MTKVKKEECEEVPETPSKSYDELLSYLNPVAKPLAGRKLTKKLYKCVKKAIKQKNIRRGVKEVQKFINKGEKGIVVMAGDTLPIEVYCHIPVMCEDRGIPYSYVPSKSDLGAAAGSKRPTCVILIKPHEDYQEAYDECLEDVQALPLPY</sequence>
<comment type="function">
    <text evidence="1">Required for ribosome biogenesis. Part of a complex which catalyzes pseudouridylation of rRNA. This involves the isomerization of uridine such that the ribose is subsequently attached to C5, instead of the normal N1. Pseudouridine ('psi') residues may serve to stabilize the conformation of rRNAs (By similarity).</text>
</comment>
<comment type="subunit">
    <text evidence="2">Component of the small nucleolar ribonucleoprotein particle containing H/ACA-type snoRNAs (H/ACA snoRNPs). Component of the telomerase holoenzyme complex.</text>
</comment>
<comment type="subcellular location">
    <subcellularLocation>
        <location evidence="1">Nucleus</location>
        <location evidence="1">Nucleolus</location>
    </subcellularLocation>
</comment>
<comment type="similarity">
    <text evidence="3">Belongs to the eukaryotic ribosomal protein eL8 family.</text>
</comment>
<dbReference type="EMBL" id="BC068845">
    <property type="protein sequence ID" value="AAH68845.1"/>
    <property type="molecule type" value="mRNA"/>
</dbReference>
<dbReference type="SMR" id="Q6NTV9"/>
<dbReference type="BioGRID" id="100903">
    <property type="interactions" value="1"/>
</dbReference>
<dbReference type="CD-CODE" id="AC502520">
    <property type="entry name" value="Nucleolus"/>
</dbReference>
<dbReference type="Proteomes" id="UP000186698">
    <property type="component" value="Unplaced"/>
</dbReference>
<dbReference type="GO" id="GO:0031429">
    <property type="term" value="C:box H/ACA snoRNP complex"/>
    <property type="evidence" value="ECO:0000318"/>
    <property type="project" value="GO_Central"/>
</dbReference>
<dbReference type="GO" id="GO:0005732">
    <property type="term" value="C:sno(s)RNA-containing ribonucleoprotein complex"/>
    <property type="evidence" value="ECO:0000250"/>
    <property type="project" value="UniProtKB"/>
</dbReference>
<dbReference type="GO" id="GO:0005697">
    <property type="term" value="C:telomerase holoenzyme complex"/>
    <property type="evidence" value="ECO:0000250"/>
    <property type="project" value="UniProtKB"/>
</dbReference>
<dbReference type="GO" id="GO:0034513">
    <property type="term" value="F:box H/ACA snoRNA binding"/>
    <property type="evidence" value="ECO:0000318"/>
    <property type="project" value="GO_Central"/>
</dbReference>
<dbReference type="GO" id="GO:0031118">
    <property type="term" value="P:rRNA pseudouridine synthesis"/>
    <property type="evidence" value="ECO:0000250"/>
    <property type="project" value="UniProtKB"/>
</dbReference>
<dbReference type="GO" id="GO:0031120">
    <property type="term" value="P:snRNA pseudouridine synthesis"/>
    <property type="evidence" value="ECO:0000318"/>
    <property type="project" value="GO_Central"/>
</dbReference>
<dbReference type="GO" id="GO:0007004">
    <property type="term" value="P:telomere maintenance via telomerase"/>
    <property type="evidence" value="ECO:0000250"/>
    <property type="project" value="UniProtKB"/>
</dbReference>
<dbReference type="FunFam" id="3.30.1330.30:FF:000016">
    <property type="entry name" value="H/ACA ribonucleoprotein complex subunit 2"/>
    <property type="match status" value="1"/>
</dbReference>
<dbReference type="Gene3D" id="3.30.1330.30">
    <property type="match status" value="1"/>
</dbReference>
<dbReference type="InterPro" id="IPR050257">
    <property type="entry name" value="eL8/uL1-like"/>
</dbReference>
<dbReference type="InterPro" id="IPR002415">
    <property type="entry name" value="H/ACA_rnp_Nhp2-like"/>
</dbReference>
<dbReference type="InterPro" id="IPR029064">
    <property type="entry name" value="Ribosomal_eL30-like_sf"/>
</dbReference>
<dbReference type="InterPro" id="IPR004037">
    <property type="entry name" value="Ribosomal_eL8-like_CS"/>
</dbReference>
<dbReference type="InterPro" id="IPR004038">
    <property type="entry name" value="Ribosomal_eL8/eL30/eS12/Gad45"/>
</dbReference>
<dbReference type="InterPro" id="IPR018492">
    <property type="entry name" value="Ribosomal_eL8/Nhp2"/>
</dbReference>
<dbReference type="PANTHER" id="PTHR23105">
    <property type="entry name" value="RIBOSOMAL PROTEIN L7AE FAMILY MEMBER"/>
    <property type="match status" value="1"/>
</dbReference>
<dbReference type="Pfam" id="PF01248">
    <property type="entry name" value="Ribosomal_L7Ae"/>
    <property type="match status" value="1"/>
</dbReference>
<dbReference type="PRINTS" id="PR00881">
    <property type="entry name" value="L7ARS6FAMILY"/>
</dbReference>
<dbReference type="PRINTS" id="PR00883">
    <property type="entry name" value="NUCLEARHMG"/>
</dbReference>
<dbReference type="SUPFAM" id="SSF55315">
    <property type="entry name" value="L30e-like"/>
    <property type="match status" value="1"/>
</dbReference>
<dbReference type="PROSITE" id="PS01082">
    <property type="entry name" value="RIBOSOMAL_L7AE"/>
    <property type="match status" value="1"/>
</dbReference>
<organism>
    <name type="scientific">Xenopus laevis</name>
    <name type="common">African clawed frog</name>
    <dbReference type="NCBI Taxonomy" id="8355"/>
    <lineage>
        <taxon>Eukaryota</taxon>
        <taxon>Metazoa</taxon>
        <taxon>Chordata</taxon>
        <taxon>Craniata</taxon>
        <taxon>Vertebrata</taxon>
        <taxon>Euteleostomi</taxon>
        <taxon>Amphibia</taxon>
        <taxon>Batrachia</taxon>
        <taxon>Anura</taxon>
        <taxon>Pipoidea</taxon>
        <taxon>Pipidae</taxon>
        <taxon>Xenopodinae</taxon>
        <taxon>Xenopus</taxon>
        <taxon>Xenopus</taxon>
    </lineage>
</organism>
<proteinExistence type="evidence at transcript level"/>
<keyword id="KW-0539">Nucleus</keyword>
<keyword id="KW-1185">Reference proteome</keyword>
<keyword id="KW-0687">Ribonucleoprotein</keyword>
<keyword id="KW-0690">Ribosome biogenesis</keyword>
<keyword id="KW-0694">RNA-binding</keyword>
<keyword id="KW-0698">rRNA processing</keyword>
<evidence type="ECO:0000250" key="1"/>
<evidence type="ECO:0000250" key="2">
    <source>
        <dbReference type="UniProtKB" id="Q9NX24"/>
    </source>
</evidence>
<evidence type="ECO:0000305" key="3"/>
<gene>
    <name type="primary">nhp2</name>
    <name type="synonym">nola2</name>
</gene>
<name>NHP2_XENLA</name>
<accession>Q6NTV9</accession>
<reference key="1">
    <citation type="submission" date="2004-04" db="EMBL/GenBank/DDBJ databases">
        <authorList>
            <consortium name="NIH - Xenopus Gene Collection (XGC) project"/>
        </authorList>
    </citation>
    <scope>NUCLEOTIDE SEQUENCE [LARGE SCALE MRNA]</scope>
    <source>
        <tissue>Embryo</tissue>
    </source>
</reference>
<feature type="chain" id="PRO_0000136767" description="H/ACA ribonucleoprotein complex subunit 2-like protein">
    <location>
        <begin position="1"/>
        <end position="149"/>
    </location>
</feature>
<protein>
    <recommendedName>
        <fullName>H/ACA ribonucleoprotein complex subunit 2-like protein</fullName>
    </recommendedName>
    <alternativeName>
        <fullName>Nucleolar protein family A member 2-like protein</fullName>
    </alternativeName>
    <alternativeName>
        <fullName>snoRNP protein NHP2-like protein</fullName>
    </alternativeName>
</protein>